<proteinExistence type="inferred from homology"/>
<keyword id="KW-0663">Pyridoxal phosphate</keyword>
<keyword id="KW-0808">Transferase</keyword>
<evidence type="ECO:0000250" key="1"/>
<evidence type="ECO:0000305" key="2"/>
<protein>
    <recommendedName>
        <fullName>Putative pyridoxal phosphate-dependent acyltransferase</fullName>
        <ecNumber>2.3.1.-</ecNumber>
    </recommendedName>
</protein>
<organism>
    <name type="scientific">Staphylococcus aureus (strain MRSA252)</name>
    <dbReference type="NCBI Taxonomy" id="282458"/>
    <lineage>
        <taxon>Bacteria</taxon>
        <taxon>Bacillati</taxon>
        <taxon>Bacillota</taxon>
        <taxon>Bacilli</taxon>
        <taxon>Bacillales</taxon>
        <taxon>Staphylococcaceae</taxon>
        <taxon>Staphylococcus</taxon>
    </lineage>
</organism>
<name>PPAT_STAAR</name>
<sequence>MVQSLHEFLEENINYLKENGLYNEIDTIEGANGPEIKINGKSYINLSSNNYLGLATNEDLKSAAKAAIDTHGVGAGAVRTINGTLDLHDELEETLAKFKGTEAAIAYQSGFNCNMAAISAVMNKNDAILSDELNHASIIDGCRLSKAKIIRVNHSDMDDLRAKAKEAVESGQYNKVMYITDGVFSMDGDVAKLPEIVEIAEEFGLLTYVDDAHGSGVMGKGAGTVKHFGLQDKIDFQIGTLSKAIGVVGGYVAGTKELIDWLKAQSRPFLFSTSLAPGDTKAITEAVKKLMASTELHDKLWDNAQYLKNGLSKLGYDTGESETPITPVIIGEEKTTQEFSKRLKDEGVYVKSIVFPTVPRGTGRVRNMPTAAHTKDMLDEAIAAYEKVGKEMNLI</sequence>
<feature type="chain" id="PRO_0000163840" description="Putative pyridoxal phosphate-dependent acyltransferase">
    <location>
        <begin position="1"/>
        <end position="395"/>
    </location>
</feature>
<feature type="binding site" evidence="1">
    <location>
        <begin position="110"/>
        <end position="111"/>
    </location>
    <ligand>
        <name>pyridoxal 5'-phosphate</name>
        <dbReference type="ChEBI" id="CHEBI:597326"/>
    </ligand>
</feature>
<feature type="binding site" evidence="1">
    <location>
        <position position="135"/>
    </location>
    <ligand>
        <name>substrate</name>
    </ligand>
</feature>
<feature type="binding site" evidence="1">
    <location>
        <position position="185"/>
    </location>
    <ligand>
        <name>pyridoxal 5'-phosphate</name>
        <dbReference type="ChEBI" id="CHEBI:597326"/>
    </ligand>
</feature>
<feature type="binding site" evidence="1">
    <location>
        <begin position="210"/>
        <end position="213"/>
    </location>
    <ligand>
        <name>pyridoxal 5'-phosphate</name>
        <dbReference type="ChEBI" id="CHEBI:597326"/>
    </ligand>
</feature>
<feature type="binding site" evidence="1">
    <location>
        <begin position="240"/>
        <end position="243"/>
    </location>
    <ligand>
        <name>pyridoxal 5'-phosphate</name>
        <dbReference type="ChEBI" id="CHEBI:597326"/>
    </ligand>
</feature>
<feature type="binding site" evidence="1">
    <location>
        <position position="357"/>
    </location>
    <ligand>
        <name>substrate</name>
    </ligand>
</feature>
<feature type="modified residue" description="N6-(pyridoxal phosphate)lysine" evidence="2">
    <location>
        <position position="243"/>
    </location>
</feature>
<gene>
    <name type="ordered locus">SAR0555</name>
</gene>
<comment type="cofactor">
    <cofactor evidence="1">
        <name>pyridoxal 5'-phosphate</name>
        <dbReference type="ChEBI" id="CHEBI:597326"/>
    </cofactor>
</comment>
<comment type="subunit">
    <text evidence="1">Homodimer.</text>
</comment>
<comment type="similarity">
    <text evidence="2">Belongs to the class-II pyridoxal-phosphate-dependent aminotransferase family.</text>
</comment>
<reference key="1">
    <citation type="journal article" date="2004" name="Proc. Natl. Acad. Sci. U.S.A.">
        <title>Complete genomes of two clinical Staphylococcus aureus strains: evidence for the rapid evolution of virulence and drug resistance.</title>
        <authorList>
            <person name="Holden M.T.G."/>
            <person name="Feil E.J."/>
            <person name="Lindsay J.A."/>
            <person name="Peacock S.J."/>
            <person name="Day N.P.J."/>
            <person name="Enright M.C."/>
            <person name="Foster T.J."/>
            <person name="Moore C.E."/>
            <person name="Hurst L."/>
            <person name="Atkin R."/>
            <person name="Barron A."/>
            <person name="Bason N."/>
            <person name="Bentley S.D."/>
            <person name="Chillingworth C."/>
            <person name="Chillingworth T."/>
            <person name="Churcher C."/>
            <person name="Clark L."/>
            <person name="Corton C."/>
            <person name="Cronin A."/>
            <person name="Doggett J."/>
            <person name="Dowd L."/>
            <person name="Feltwell T."/>
            <person name="Hance Z."/>
            <person name="Harris B."/>
            <person name="Hauser H."/>
            <person name="Holroyd S."/>
            <person name="Jagels K."/>
            <person name="James K.D."/>
            <person name="Lennard N."/>
            <person name="Line A."/>
            <person name="Mayes R."/>
            <person name="Moule S."/>
            <person name="Mungall K."/>
            <person name="Ormond D."/>
            <person name="Quail M.A."/>
            <person name="Rabbinowitsch E."/>
            <person name="Rutherford K.M."/>
            <person name="Sanders M."/>
            <person name="Sharp S."/>
            <person name="Simmonds M."/>
            <person name="Stevens K."/>
            <person name="Whitehead S."/>
            <person name="Barrell B.G."/>
            <person name="Spratt B.G."/>
            <person name="Parkhill J."/>
        </authorList>
    </citation>
    <scope>NUCLEOTIDE SEQUENCE [LARGE SCALE GENOMIC DNA]</scope>
    <source>
        <strain>MRSA252</strain>
    </source>
</reference>
<accession>Q6GJB8</accession>
<dbReference type="EC" id="2.3.1.-"/>
<dbReference type="EMBL" id="BX571856">
    <property type="protein sequence ID" value="CAG39576.1"/>
    <property type="molecule type" value="Genomic_DNA"/>
</dbReference>
<dbReference type="RefSeq" id="WP_000250820.1">
    <property type="nucleotide sequence ID" value="NC_002952.2"/>
</dbReference>
<dbReference type="SMR" id="Q6GJB8"/>
<dbReference type="KEGG" id="sar:SAR0555"/>
<dbReference type="HOGENOM" id="CLU_015846_11_0_9"/>
<dbReference type="Proteomes" id="UP000000596">
    <property type="component" value="Chromosome"/>
</dbReference>
<dbReference type="GO" id="GO:0030170">
    <property type="term" value="F:pyridoxal phosphate binding"/>
    <property type="evidence" value="ECO:0007669"/>
    <property type="project" value="InterPro"/>
</dbReference>
<dbReference type="GO" id="GO:0016740">
    <property type="term" value="F:transferase activity"/>
    <property type="evidence" value="ECO:0007669"/>
    <property type="project" value="UniProtKB-KW"/>
</dbReference>
<dbReference type="GO" id="GO:0009058">
    <property type="term" value="P:biosynthetic process"/>
    <property type="evidence" value="ECO:0007669"/>
    <property type="project" value="InterPro"/>
</dbReference>
<dbReference type="CDD" id="cd06454">
    <property type="entry name" value="KBL_like"/>
    <property type="match status" value="1"/>
</dbReference>
<dbReference type="FunFam" id="3.40.640.10:FF:000006">
    <property type="entry name" value="5-aminolevulinate synthase, mitochondrial"/>
    <property type="match status" value="1"/>
</dbReference>
<dbReference type="Gene3D" id="3.90.1150.10">
    <property type="entry name" value="Aspartate Aminotransferase, domain 1"/>
    <property type="match status" value="1"/>
</dbReference>
<dbReference type="Gene3D" id="3.40.640.10">
    <property type="entry name" value="Type I PLP-dependent aspartate aminotransferase-like (Major domain)"/>
    <property type="match status" value="1"/>
</dbReference>
<dbReference type="InterPro" id="IPR001917">
    <property type="entry name" value="Aminotrans_II_pyridoxalP_BS"/>
</dbReference>
<dbReference type="InterPro" id="IPR004839">
    <property type="entry name" value="Aminotransferase_I/II_large"/>
</dbReference>
<dbReference type="InterPro" id="IPR050087">
    <property type="entry name" value="AON_synthase_class-II"/>
</dbReference>
<dbReference type="InterPro" id="IPR010962">
    <property type="entry name" value="AONS_Archaea/Firmicutes"/>
</dbReference>
<dbReference type="InterPro" id="IPR015424">
    <property type="entry name" value="PyrdxlP-dep_Trfase"/>
</dbReference>
<dbReference type="InterPro" id="IPR015421">
    <property type="entry name" value="PyrdxlP-dep_Trfase_major"/>
</dbReference>
<dbReference type="InterPro" id="IPR015422">
    <property type="entry name" value="PyrdxlP-dep_Trfase_small"/>
</dbReference>
<dbReference type="NCBIfam" id="TIGR01825">
    <property type="entry name" value="gly_Cac_T_rel"/>
    <property type="match status" value="1"/>
</dbReference>
<dbReference type="NCBIfam" id="NF005394">
    <property type="entry name" value="PRK06939.1"/>
    <property type="match status" value="1"/>
</dbReference>
<dbReference type="PANTHER" id="PTHR13693">
    <property type="entry name" value="CLASS II AMINOTRANSFERASE/8-AMINO-7-OXONONANOATE SYNTHASE"/>
    <property type="match status" value="1"/>
</dbReference>
<dbReference type="PANTHER" id="PTHR13693:SF3">
    <property type="entry name" value="LD36009P"/>
    <property type="match status" value="1"/>
</dbReference>
<dbReference type="Pfam" id="PF00155">
    <property type="entry name" value="Aminotran_1_2"/>
    <property type="match status" value="1"/>
</dbReference>
<dbReference type="SUPFAM" id="SSF53383">
    <property type="entry name" value="PLP-dependent transferases"/>
    <property type="match status" value="1"/>
</dbReference>
<dbReference type="PROSITE" id="PS00599">
    <property type="entry name" value="AA_TRANSFER_CLASS_2"/>
    <property type="match status" value="1"/>
</dbReference>